<name>SYP_HAEIE</name>
<comment type="function">
    <text evidence="1">Catalyzes the attachment of proline to tRNA(Pro) in a two-step reaction: proline is first activated by ATP to form Pro-AMP and then transferred to the acceptor end of tRNA(Pro). As ProRS can inadvertently accommodate and process non-cognate amino acids such as alanine and cysteine, to avoid such errors it has two additional distinct editing activities against alanine. One activity is designated as 'pretransfer' editing and involves the tRNA(Pro)-independent hydrolysis of activated Ala-AMP. The other activity is designated 'posttransfer' editing and involves deacylation of mischarged Ala-tRNA(Pro). The misacylated Cys-tRNA(Pro) is not edited by ProRS.</text>
</comment>
<comment type="catalytic activity">
    <reaction evidence="1">
        <text>tRNA(Pro) + L-proline + ATP = L-prolyl-tRNA(Pro) + AMP + diphosphate</text>
        <dbReference type="Rhea" id="RHEA:14305"/>
        <dbReference type="Rhea" id="RHEA-COMP:9700"/>
        <dbReference type="Rhea" id="RHEA-COMP:9702"/>
        <dbReference type="ChEBI" id="CHEBI:30616"/>
        <dbReference type="ChEBI" id="CHEBI:33019"/>
        <dbReference type="ChEBI" id="CHEBI:60039"/>
        <dbReference type="ChEBI" id="CHEBI:78442"/>
        <dbReference type="ChEBI" id="CHEBI:78532"/>
        <dbReference type="ChEBI" id="CHEBI:456215"/>
        <dbReference type="EC" id="6.1.1.15"/>
    </reaction>
</comment>
<comment type="subunit">
    <text evidence="1">Homodimer.</text>
</comment>
<comment type="subcellular location">
    <subcellularLocation>
        <location evidence="1">Cytoplasm</location>
    </subcellularLocation>
</comment>
<comment type="domain">
    <text evidence="1">Consists of three domains: the N-terminal catalytic domain, the editing domain and the C-terminal anticodon-binding domain.</text>
</comment>
<comment type="similarity">
    <text evidence="1">Belongs to the class-II aminoacyl-tRNA synthetase family. ProS type 1 subfamily.</text>
</comment>
<accession>A5UDZ4</accession>
<feature type="chain" id="PRO_1000069143" description="Proline--tRNA ligase">
    <location>
        <begin position="1"/>
        <end position="572"/>
    </location>
</feature>
<protein>
    <recommendedName>
        <fullName evidence="1">Proline--tRNA ligase</fullName>
        <ecNumber evidence="1">6.1.1.15</ecNumber>
    </recommendedName>
    <alternativeName>
        <fullName evidence="1">Prolyl-tRNA synthetase</fullName>
        <shortName evidence="1">ProRS</shortName>
    </alternativeName>
</protein>
<evidence type="ECO:0000255" key="1">
    <source>
        <dbReference type="HAMAP-Rule" id="MF_01569"/>
    </source>
</evidence>
<organism>
    <name type="scientific">Haemophilus influenzae (strain PittEE)</name>
    <dbReference type="NCBI Taxonomy" id="374930"/>
    <lineage>
        <taxon>Bacteria</taxon>
        <taxon>Pseudomonadati</taxon>
        <taxon>Pseudomonadota</taxon>
        <taxon>Gammaproteobacteria</taxon>
        <taxon>Pasteurellales</taxon>
        <taxon>Pasteurellaceae</taxon>
        <taxon>Haemophilus</taxon>
    </lineage>
</organism>
<reference key="1">
    <citation type="journal article" date="2007" name="Genome Biol.">
        <title>Characterization and modeling of the Haemophilus influenzae core and supragenomes based on the complete genomic sequences of Rd and 12 clinical nontypeable strains.</title>
        <authorList>
            <person name="Hogg J.S."/>
            <person name="Hu F.Z."/>
            <person name="Janto B."/>
            <person name="Boissy R."/>
            <person name="Hayes J."/>
            <person name="Keefe R."/>
            <person name="Post J.C."/>
            <person name="Ehrlich G.D."/>
        </authorList>
    </citation>
    <scope>NUCLEOTIDE SEQUENCE [LARGE SCALE GENOMIC DNA]</scope>
    <source>
        <strain>PittEE</strain>
    </source>
</reference>
<sequence>MRTSQYLFSTLKETPNDAQVVSHQLMLRAGMIRPMASGLYNWLPTGIRVLKKVEKIIREEMNKGGAIEVLMPVVQPAELWEESGRWEQYGPELLRFEDRGNRNFVLGPTHEEVITDLIRREVSSYKQLPLNLYQIQTKFRDEVRPRFGVMRSREFIMKDAYSFHTTQESLQETYDVMYQVYSNIFNRLGLDFRAVQADTGSIGGSASHEFQVLASSGEDDVVFSTESDFAANIELAEAVAIGERQAPTAEMTLVDTPNAKTINELVEQFNLPIEKTVKTLIVKGADENQPLVALIIRGDHELNEIKAQKHPLVADPLEFADEAEIKAKIGARVGSLGAVNLNIPAIIDRTVALMSDFSCGANIDGKHYFNVNWERDVAMPEVFDLRNVVEGDRSPDGKGTLQIKRGIEVGHIFQLGKKYSEAMKATVQGEDGKPLVMTMGCYGIGVTRVVASAIEQHHDDRGIIWPSDEIAPFTVAIVPMNMHKSESVQKYAEELYRTLQSQGVDVIFDDRKERPGVMFADMELIGVPHMVVIGEKNLDNGEIEYKNRRSGEKEMISKDKLLSVLNEKLGNL</sequence>
<proteinExistence type="inferred from homology"/>
<keyword id="KW-0030">Aminoacyl-tRNA synthetase</keyword>
<keyword id="KW-0067">ATP-binding</keyword>
<keyword id="KW-0963">Cytoplasm</keyword>
<keyword id="KW-0436">Ligase</keyword>
<keyword id="KW-0547">Nucleotide-binding</keyword>
<keyword id="KW-0648">Protein biosynthesis</keyword>
<gene>
    <name evidence="1" type="primary">proS</name>
    <name type="ordered locus">CGSHiEE_08470</name>
</gene>
<dbReference type="EC" id="6.1.1.15" evidence="1"/>
<dbReference type="EMBL" id="CP000671">
    <property type="protein sequence ID" value="ABQ98995.1"/>
    <property type="molecule type" value="Genomic_DNA"/>
</dbReference>
<dbReference type="SMR" id="A5UDZ4"/>
<dbReference type="KEGG" id="hip:CGSHiEE_08470"/>
<dbReference type="HOGENOM" id="CLU_016739_0_0_6"/>
<dbReference type="GO" id="GO:0005829">
    <property type="term" value="C:cytosol"/>
    <property type="evidence" value="ECO:0007669"/>
    <property type="project" value="TreeGrafter"/>
</dbReference>
<dbReference type="GO" id="GO:0002161">
    <property type="term" value="F:aminoacyl-tRNA deacylase activity"/>
    <property type="evidence" value="ECO:0007669"/>
    <property type="project" value="InterPro"/>
</dbReference>
<dbReference type="GO" id="GO:0005524">
    <property type="term" value="F:ATP binding"/>
    <property type="evidence" value="ECO:0007669"/>
    <property type="project" value="UniProtKB-UniRule"/>
</dbReference>
<dbReference type="GO" id="GO:0004827">
    <property type="term" value="F:proline-tRNA ligase activity"/>
    <property type="evidence" value="ECO:0007669"/>
    <property type="project" value="UniProtKB-UniRule"/>
</dbReference>
<dbReference type="GO" id="GO:0006433">
    <property type="term" value="P:prolyl-tRNA aminoacylation"/>
    <property type="evidence" value="ECO:0007669"/>
    <property type="project" value="UniProtKB-UniRule"/>
</dbReference>
<dbReference type="CDD" id="cd04334">
    <property type="entry name" value="ProRS-INS"/>
    <property type="match status" value="1"/>
</dbReference>
<dbReference type="CDD" id="cd00861">
    <property type="entry name" value="ProRS_anticodon_short"/>
    <property type="match status" value="1"/>
</dbReference>
<dbReference type="CDD" id="cd00779">
    <property type="entry name" value="ProRS_core_prok"/>
    <property type="match status" value="1"/>
</dbReference>
<dbReference type="FunFam" id="3.30.930.10:FF:000043">
    <property type="entry name" value="Proline--tRNA ligase"/>
    <property type="match status" value="1"/>
</dbReference>
<dbReference type="FunFam" id="3.30.930.10:FF:000097">
    <property type="entry name" value="Proline--tRNA ligase"/>
    <property type="match status" value="1"/>
</dbReference>
<dbReference type="FunFam" id="3.40.50.800:FF:000057">
    <property type="entry name" value="Proline--tRNA ligase"/>
    <property type="match status" value="1"/>
</dbReference>
<dbReference type="FunFam" id="3.90.960.10:FF:000001">
    <property type="entry name" value="Proline--tRNA ligase"/>
    <property type="match status" value="1"/>
</dbReference>
<dbReference type="Gene3D" id="3.40.50.800">
    <property type="entry name" value="Anticodon-binding domain"/>
    <property type="match status" value="1"/>
</dbReference>
<dbReference type="Gene3D" id="3.30.930.10">
    <property type="entry name" value="Bira Bifunctional Protein, Domain 2"/>
    <property type="match status" value="2"/>
</dbReference>
<dbReference type="HAMAP" id="MF_01569">
    <property type="entry name" value="Pro_tRNA_synth_type1"/>
    <property type="match status" value="1"/>
</dbReference>
<dbReference type="InterPro" id="IPR002314">
    <property type="entry name" value="aa-tRNA-synt_IIb"/>
</dbReference>
<dbReference type="InterPro" id="IPR006195">
    <property type="entry name" value="aa-tRNA-synth_II"/>
</dbReference>
<dbReference type="InterPro" id="IPR045864">
    <property type="entry name" value="aa-tRNA-synth_II/BPL/LPL"/>
</dbReference>
<dbReference type="InterPro" id="IPR004154">
    <property type="entry name" value="Anticodon-bd"/>
</dbReference>
<dbReference type="InterPro" id="IPR036621">
    <property type="entry name" value="Anticodon-bd_dom_sf"/>
</dbReference>
<dbReference type="InterPro" id="IPR002316">
    <property type="entry name" value="Pro-tRNA-ligase_IIa"/>
</dbReference>
<dbReference type="InterPro" id="IPR004500">
    <property type="entry name" value="Pro-tRNA-synth_IIa_bac-type"/>
</dbReference>
<dbReference type="InterPro" id="IPR023717">
    <property type="entry name" value="Pro-tRNA-Synthase_IIa_type1"/>
</dbReference>
<dbReference type="InterPro" id="IPR050062">
    <property type="entry name" value="Pro-tRNA_synthetase"/>
</dbReference>
<dbReference type="InterPro" id="IPR044140">
    <property type="entry name" value="ProRS_anticodon_short"/>
</dbReference>
<dbReference type="InterPro" id="IPR033730">
    <property type="entry name" value="ProRS_core_prok"/>
</dbReference>
<dbReference type="InterPro" id="IPR036754">
    <property type="entry name" value="YbaK/aa-tRNA-synt-asso_dom_sf"/>
</dbReference>
<dbReference type="InterPro" id="IPR007214">
    <property type="entry name" value="YbaK/aa-tRNA-synth-assoc-dom"/>
</dbReference>
<dbReference type="NCBIfam" id="NF006625">
    <property type="entry name" value="PRK09194.1"/>
    <property type="match status" value="1"/>
</dbReference>
<dbReference type="NCBIfam" id="TIGR00409">
    <property type="entry name" value="proS_fam_II"/>
    <property type="match status" value="1"/>
</dbReference>
<dbReference type="PANTHER" id="PTHR42753">
    <property type="entry name" value="MITOCHONDRIAL RIBOSOME PROTEIN L39/PROLYL-TRNA LIGASE FAMILY MEMBER"/>
    <property type="match status" value="1"/>
</dbReference>
<dbReference type="PANTHER" id="PTHR42753:SF2">
    <property type="entry name" value="PROLINE--TRNA LIGASE"/>
    <property type="match status" value="1"/>
</dbReference>
<dbReference type="Pfam" id="PF03129">
    <property type="entry name" value="HGTP_anticodon"/>
    <property type="match status" value="1"/>
</dbReference>
<dbReference type="Pfam" id="PF00587">
    <property type="entry name" value="tRNA-synt_2b"/>
    <property type="match status" value="1"/>
</dbReference>
<dbReference type="Pfam" id="PF04073">
    <property type="entry name" value="tRNA_edit"/>
    <property type="match status" value="1"/>
</dbReference>
<dbReference type="PIRSF" id="PIRSF001535">
    <property type="entry name" value="ProRS_1"/>
    <property type="match status" value="1"/>
</dbReference>
<dbReference type="PRINTS" id="PR01046">
    <property type="entry name" value="TRNASYNTHPRO"/>
</dbReference>
<dbReference type="SUPFAM" id="SSF52954">
    <property type="entry name" value="Class II aaRS ABD-related"/>
    <property type="match status" value="1"/>
</dbReference>
<dbReference type="SUPFAM" id="SSF55681">
    <property type="entry name" value="Class II aaRS and biotin synthetases"/>
    <property type="match status" value="1"/>
</dbReference>
<dbReference type="SUPFAM" id="SSF55826">
    <property type="entry name" value="YbaK/ProRS associated domain"/>
    <property type="match status" value="1"/>
</dbReference>
<dbReference type="PROSITE" id="PS50862">
    <property type="entry name" value="AA_TRNA_LIGASE_II"/>
    <property type="match status" value="1"/>
</dbReference>